<accession>Q0A4L5</accession>
<protein>
    <recommendedName>
        <fullName evidence="1">Membrane protein insertase YidC</fullName>
    </recommendedName>
    <alternativeName>
        <fullName evidence="1">Foldase YidC</fullName>
    </alternativeName>
    <alternativeName>
        <fullName evidence="1">Membrane integrase YidC</fullName>
    </alternativeName>
    <alternativeName>
        <fullName evidence="1">Membrane protein YidC</fullName>
    </alternativeName>
</protein>
<proteinExistence type="inferred from homology"/>
<sequence>MENQRIFLFLALSILGLLLWTSWERDTRAPVATEEVVEAEDDVPAPAETPDEAPDPADGETPARDRAEVEDERRVRVVTDLMDLEISTRGGDIRRVDLLQHGTTATDDTPFRLMADDRDPLFIAQTGLIDDSDNRPDHRALFRAERDEYRLSEGEDEIQVRLTWADENRGIEVARVYTVQRDSYVIDVRHQVRNAGDEEWRGYSYFQLRRNPDPPGTTPWYIYTFTGGSIYSPDDRFEKISFDDMDDTSLSRDIRDGWAAMIQHYFLGAWIPPESQALRYYTRAQAGNEYVLGMSSGRQTVQPGGEAEFVNRLFVGPKEQDRLRELHDSMTLSVDYGFLTVLAKPLFWLLDNIQDIVGNWGVAIILVTLLIKLAFYKLSATSYRSMAKMRRVQPRMQQLKERHGDDKQALNQAMMELYKKEKINPLGGCLPILVQIPVFIALYWVLLESVELRHAPFMLWIQDLSSRDPYFVLPLLMGATMFLQQRLNPAPLDPIQQRIMMALPIVFTGFFMLFPAGLVLYWLVNNGLSIAQQWYIMRNLEAIEAGKAAKSGKADKDQKKKD</sequence>
<feature type="chain" id="PRO_1000070054" description="Membrane protein insertase YidC">
    <location>
        <begin position="1"/>
        <end position="562"/>
    </location>
</feature>
<feature type="transmembrane region" description="Helical" evidence="1">
    <location>
        <begin position="4"/>
        <end position="24"/>
    </location>
</feature>
<feature type="transmembrane region" description="Helical" evidence="1">
    <location>
        <begin position="330"/>
        <end position="350"/>
    </location>
</feature>
<feature type="transmembrane region" description="Helical" evidence="1">
    <location>
        <begin position="356"/>
        <end position="376"/>
    </location>
</feature>
<feature type="transmembrane region" description="Helical" evidence="1">
    <location>
        <begin position="426"/>
        <end position="446"/>
    </location>
</feature>
<feature type="transmembrane region" description="Helical" evidence="1">
    <location>
        <begin position="499"/>
        <end position="519"/>
    </location>
</feature>
<feature type="region of interest" description="Disordered" evidence="2">
    <location>
        <begin position="33"/>
        <end position="71"/>
    </location>
</feature>
<feature type="compositionally biased region" description="Acidic residues" evidence="2">
    <location>
        <begin position="35"/>
        <end position="58"/>
    </location>
</feature>
<feature type="compositionally biased region" description="Basic and acidic residues" evidence="2">
    <location>
        <begin position="61"/>
        <end position="71"/>
    </location>
</feature>
<name>YIDC_ALKEH</name>
<gene>
    <name evidence="1" type="primary">yidC</name>
    <name type="ordered locus">Mlg_2882</name>
</gene>
<reference key="1">
    <citation type="submission" date="2006-08" db="EMBL/GenBank/DDBJ databases">
        <title>Complete sequence of Alkalilimnicola ehrilichei MLHE-1.</title>
        <authorList>
            <person name="Copeland A."/>
            <person name="Lucas S."/>
            <person name="Lapidus A."/>
            <person name="Barry K."/>
            <person name="Detter J.C."/>
            <person name="Glavina del Rio T."/>
            <person name="Hammon N."/>
            <person name="Israni S."/>
            <person name="Dalin E."/>
            <person name="Tice H."/>
            <person name="Pitluck S."/>
            <person name="Sims D."/>
            <person name="Brettin T."/>
            <person name="Bruce D."/>
            <person name="Han C."/>
            <person name="Tapia R."/>
            <person name="Gilna P."/>
            <person name="Schmutz J."/>
            <person name="Larimer F."/>
            <person name="Land M."/>
            <person name="Hauser L."/>
            <person name="Kyrpides N."/>
            <person name="Mikhailova N."/>
            <person name="Oremland R.S."/>
            <person name="Hoeft S.E."/>
            <person name="Switzer-Blum J."/>
            <person name="Kulp T."/>
            <person name="King G."/>
            <person name="Tabita R."/>
            <person name="Witte B."/>
            <person name="Santini J.M."/>
            <person name="Basu P."/>
            <person name="Hollibaugh J.T."/>
            <person name="Xie G."/>
            <person name="Stolz J.F."/>
            <person name="Richardson P."/>
        </authorList>
    </citation>
    <scope>NUCLEOTIDE SEQUENCE [LARGE SCALE GENOMIC DNA]</scope>
    <source>
        <strain>ATCC BAA-1101 / DSM 17681 / MLHE-1</strain>
    </source>
</reference>
<comment type="function">
    <text evidence="1">Required for the insertion and/or proper folding and/or complex formation of integral membrane proteins into the membrane. Involved in integration of membrane proteins that insert both dependently and independently of the Sec translocase complex, as well as at least some lipoproteins. Aids folding of multispanning membrane proteins.</text>
</comment>
<comment type="subunit">
    <text evidence="1">Interacts with the Sec translocase complex via SecD. Specifically interacts with transmembrane segments of nascent integral membrane proteins during membrane integration.</text>
</comment>
<comment type="subcellular location">
    <subcellularLocation>
        <location evidence="1">Cell inner membrane</location>
        <topology evidence="1">Multi-pass membrane protein</topology>
    </subcellularLocation>
</comment>
<comment type="similarity">
    <text evidence="1">Belongs to the OXA1/ALB3/YidC family. Type 1 subfamily.</text>
</comment>
<dbReference type="EMBL" id="CP000453">
    <property type="protein sequence ID" value="ABI58222.1"/>
    <property type="molecule type" value="Genomic_DNA"/>
</dbReference>
<dbReference type="RefSeq" id="WP_011630615.1">
    <property type="nucleotide sequence ID" value="NC_008340.1"/>
</dbReference>
<dbReference type="SMR" id="Q0A4L5"/>
<dbReference type="KEGG" id="aeh:Mlg_2882"/>
<dbReference type="eggNOG" id="COG0706">
    <property type="taxonomic scope" value="Bacteria"/>
</dbReference>
<dbReference type="HOGENOM" id="CLU_016535_3_0_6"/>
<dbReference type="OrthoDB" id="9780552at2"/>
<dbReference type="Proteomes" id="UP000001962">
    <property type="component" value="Chromosome"/>
</dbReference>
<dbReference type="GO" id="GO:0005886">
    <property type="term" value="C:plasma membrane"/>
    <property type="evidence" value="ECO:0007669"/>
    <property type="project" value="UniProtKB-SubCell"/>
</dbReference>
<dbReference type="GO" id="GO:0032977">
    <property type="term" value="F:membrane insertase activity"/>
    <property type="evidence" value="ECO:0007669"/>
    <property type="project" value="InterPro"/>
</dbReference>
<dbReference type="GO" id="GO:0051205">
    <property type="term" value="P:protein insertion into membrane"/>
    <property type="evidence" value="ECO:0007669"/>
    <property type="project" value="TreeGrafter"/>
</dbReference>
<dbReference type="GO" id="GO:0015031">
    <property type="term" value="P:protein transport"/>
    <property type="evidence" value="ECO:0007669"/>
    <property type="project" value="UniProtKB-KW"/>
</dbReference>
<dbReference type="CDD" id="cd20070">
    <property type="entry name" value="5TM_YidC_Alb3"/>
    <property type="match status" value="1"/>
</dbReference>
<dbReference type="CDD" id="cd19961">
    <property type="entry name" value="EcYidC-like_peri"/>
    <property type="match status" value="1"/>
</dbReference>
<dbReference type="Gene3D" id="2.70.98.90">
    <property type="match status" value="1"/>
</dbReference>
<dbReference type="HAMAP" id="MF_01810">
    <property type="entry name" value="YidC_type1"/>
    <property type="match status" value="1"/>
</dbReference>
<dbReference type="InterPro" id="IPR019998">
    <property type="entry name" value="Membr_insert_YidC"/>
</dbReference>
<dbReference type="InterPro" id="IPR028053">
    <property type="entry name" value="Membr_insert_YidC_N"/>
</dbReference>
<dbReference type="InterPro" id="IPR001708">
    <property type="entry name" value="YidC/ALB3/OXA1/COX18"/>
</dbReference>
<dbReference type="InterPro" id="IPR028055">
    <property type="entry name" value="YidC/Oxa/ALB_C"/>
</dbReference>
<dbReference type="InterPro" id="IPR047196">
    <property type="entry name" value="YidC_ALB_C"/>
</dbReference>
<dbReference type="InterPro" id="IPR038221">
    <property type="entry name" value="YidC_periplasmic_sf"/>
</dbReference>
<dbReference type="NCBIfam" id="NF002352">
    <property type="entry name" value="PRK01318.1-3"/>
    <property type="match status" value="1"/>
</dbReference>
<dbReference type="NCBIfam" id="NF002353">
    <property type="entry name" value="PRK01318.1-4"/>
    <property type="match status" value="1"/>
</dbReference>
<dbReference type="NCBIfam" id="TIGR03593">
    <property type="entry name" value="yidC_nterm"/>
    <property type="match status" value="1"/>
</dbReference>
<dbReference type="NCBIfam" id="TIGR03592">
    <property type="entry name" value="yidC_oxa1_cterm"/>
    <property type="match status" value="1"/>
</dbReference>
<dbReference type="PANTHER" id="PTHR12428:SF65">
    <property type="entry name" value="CYTOCHROME C OXIDASE ASSEMBLY PROTEIN COX18, MITOCHONDRIAL"/>
    <property type="match status" value="1"/>
</dbReference>
<dbReference type="PANTHER" id="PTHR12428">
    <property type="entry name" value="OXA1"/>
    <property type="match status" value="1"/>
</dbReference>
<dbReference type="Pfam" id="PF02096">
    <property type="entry name" value="60KD_IMP"/>
    <property type="match status" value="1"/>
</dbReference>
<dbReference type="Pfam" id="PF14849">
    <property type="entry name" value="YidC_periplas"/>
    <property type="match status" value="1"/>
</dbReference>
<dbReference type="PRINTS" id="PR00701">
    <property type="entry name" value="60KDINNERMP"/>
</dbReference>
<dbReference type="PRINTS" id="PR01900">
    <property type="entry name" value="YIDCPROTEIN"/>
</dbReference>
<evidence type="ECO:0000255" key="1">
    <source>
        <dbReference type="HAMAP-Rule" id="MF_01810"/>
    </source>
</evidence>
<evidence type="ECO:0000256" key="2">
    <source>
        <dbReference type="SAM" id="MobiDB-lite"/>
    </source>
</evidence>
<organism>
    <name type="scientific">Alkalilimnicola ehrlichii (strain ATCC BAA-1101 / DSM 17681 / MLHE-1)</name>
    <dbReference type="NCBI Taxonomy" id="187272"/>
    <lineage>
        <taxon>Bacteria</taxon>
        <taxon>Pseudomonadati</taxon>
        <taxon>Pseudomonadota</taxon>
        <taxon>Gammaproteobacteria</taxon>
        <taxon>Chromatiales</taxon>
        <taxon>Ectothiorhodospiraceae</taxon>
        <taxon>Alkalilimnicola</taxon>
    </lineage>
</organism>
<keyword id="KW-0997">Cell inner membrane</keyword>
<keyword id="KW-1003">Cell membrane</keyword>
<keyword id="KW-0143">Chaperone</keyword>
<keyword id="KW-0472">Membrane</keyword>
<keyword id="KW-0653">Protein transport</keyword>
<keyword id="KW-1185">Reference proteome</keyword>
<keyword id="KW-0812">Transmembrane</keyword>
<keyword id="KW-1133">Transmembrane helix</keyword>
<keyword id="KW-0813">Transport</keyword>